<accession>P54759</accession>
<protein>
    <recommendedName>
        <fullName>Ephrin type-A receptor 7</fullName>
        <ecNumber>2.7.10.1</ecNumber>
    </recommendedName>
    <alternativeName>
        <fullName>EPH homology kinase 3</fullName>
        <shortName>EHK-3</shortName>
    </alternativeName>
</protein>
<sequence>MVVQTRYPSWIILCYIWLLGFAHTGEAQAAKEVLLLDSKAQQTELEWISSPPSGWEEISGLDENYTPIRTYQVCQVMEPNQNNWLRTNWISKGNAQRIFVELKFTLRDCNSLPGVLGTCKETFNLYYYETDYDTGRNIRENLYVKIDTIAADESFTQGDLGERKMKLNTEVREIGPLSKKGFYLAFQDVGACIALVSVKVYYKKCWSIIENLAVFPDTVTGSEFSSLVEVRGTCVSSAEEEAENSPRMHCSAEGEWLVPIGKCICKAGYQQKGDTCEPCGRRFYKSSSQDLQCSRCPTHSFSDREGSSRCECEDGYYRAPSDPPYVACTRPPSAPQNLIFNINQTTVSLEWSPPADNGGRNDVTYRILCKRCSWEQGECVPCGSNIGYMPQQTGLEDNYVTVMDLLAHANYTFEVEAVNGVSDLSRSQRLFAAVSITTGQAAPSQVSGVMKERVLQRSVELSWQEPEHPNGVITEYEIKYYEKDQRERTYSTLKTKSTSASINNLKPGTVYVFQIRAFTAAGYGNYSPRLDVATLEEASGKMFEATAVSSEQNPVIIIAVVAVAGTIILVFMVFGFIIGRRHCGYSKADQEGDEELYFHFKFPGTKTYIDPETYEDPNRAVHQFAKELDASCIKIERVIGAGEFGEVCSGRLKLPGKRDVAVAIKTLKVGYTEKQRRDFLCEASIMGQFDHPNVVHLEGVVTRGKPVMIVIEFMENGALDAFLRKHDGQFTVIQLVGMLRGIAAGMRYLADMGYVHRDLAARNILVNSNLVCKVSDFGLSRVIEDDPEAVYTTTGGKIPVRWTAPEAIQYRKFTSASDVWSYGIVMWEVMSYGERPYWDMSNQDVIKAIEEGYRLPAPMDCPAGLHQLMLDCWQKERAERPKFEQIVGILDKMIRNPSSLKTPLGTCSRPISPLLDQSTPDFTAFCSVGEWLQAIKMERYKDNFTAAGYNSLESVARMTIDDVMSLGITLVGHQKKIMSSIQTMRAQMLHLHGTGIQV</sequence>
<feature type="signal peptide" evidence="2">
    <location>
        <begin position="1"/>
        <end position="27"/>
    </location>
</feature>
<feature type="chain" id="PRO_0000016820" description="Ephrin type-A receptor 7">
    <location>
        <begin position="28"/>
        <end position="998"/>
    </location>
</feature>
<feature type="topological domain" description="Extracellular" evidence="2">
    <location>
        <begin position="28"/>
        <end position="555"/>
    </location>
</feature>
<feature type="transmembrane region" description="Helical" evidence="2">
    <location>
        <begin position="556"/>
        <end position="576"/>
    </location>
</feature>
<feature type="topological domain" description="Cytoplasmic" evidence="2">
    <location>
        <begin position="577"/>
        <end position="998"/>
    </location>
</feature>
<feature type="domain" description="Eph LBD" evidence="6">
    <location>
        <begin position="32"/>
        <end position="210"/>
    </location>
</feature>
<feature type="domain" description="Fibronectin type-III 1" evidence="5">
    <location>
        <begin position="331"/>
        <end position="441"/>
    </location>
</feature>
<feature type="domain" description="Fibronectin type-III 2" evidence="5">
    <location>
        <begin position="442"/>
        <end position="537"/>
    </location>
</feature>
<feature type="domain" description="Protein kinase" evidence="3">
    <location>
        <begin position="633"/>
        <end position="894"/>
    </location>
</feature>
<feature type="domain" description="SAM" evidence="4">
    <location>
        <begin position="923"/>
        <end position="987"/>
    </location>
</feature>
<feature type="short sequence motif" description="PDZ-binding" evidence="2">
    <location>
        <begin position="996"/>
        <end position="998"/>
    </location>
</feature>
<feature type="active site" description="Proton acceptor" evidence="3 7">
    <location>
        <position position="758"/>
    </location>
</feature>
<feature type="binding site" evidence="3">
    <location>
        <begin position="639"/>
        <end position="647"/>
    </location>
    <ligand>
        <name>ATP</name>
        <dbReference type="ChEBI" id="CHEBI:30616"/>
    </ligand>
</feature>
<feature type="binding site" evidence="3">
    <location>
        <position position="665"/>
    </location>
    <ligand>
        <name>ATP</name>
        <dbReference type="ChEBI" id="CHEBI:30616"/>
    </ligand>
</feature>
<feature type="modified residue" description="Phosphotyrosine; by autocatalysis" evidence="2">
    <location>
        <position position="608"/>
    </location>
</feature>
<feature type="modified residue" description="Phosphotyrosine; by autocatalysis" evidence="2">
    <location>
        <position position="614"/>
    </location>
</feature>
<feature type="modified residue" description="Phosphotyrosine; by autocatalysis" evidence="2">
    <location>
        <position position="791"/>
    </location>
</feature>
<feature type="modified residue" description="Phosphotyrosine; by autocatalysis" evidence="2">
    <location>
        <position position="940"/>
    </location>
</feature>
<feature type="glycosylation site" description="N-linked (GlcNAc...) asparagine" evidence="2">
    <location>
        <position position="343"/>
    </location>
</feature>
<feature type="glycosylation site" description="N-linked (GlcNAc...) asparagine" evidence="2">
    <location>
        <position position="410"/>
    </location>
</feature>
<feature type="splice variant" id="VSP_003012" description="In isoform Short." evidence="9">
    <original>FKFPGTKTYID</original>
    <variation>SLVTNEHLSVL</variation>
    <location>
        <begin position="600"/>
        <end position="610"/>
    </location>
</feature>
<comment type="function">
    <text evidence="8">Receptor tyrosine kinase which binds promiscuously GPI-anchored ephrin-A family ligands residing on adjacent cells, leading to contact-dependent bidirectional signaling into neighboring cells. The signaling pathway downstream of the receptor is referred to as forward signaling while the signaling pathway downstream of the ephrin ligand is referred to as reverse signaling. Among GPI-anchored ephrin-A ligands, EFNA5 is a cognate/functional ligand for EPHA7 and their interaction regulates brain development modulating cell-cell adhesion and repulsion. Has a repellent activity on axons and is for instance involved in the guidance of corticothalamic axons and in the proper topographic mapping of retinal axons to the colliculus. May also regulate brain development through a caspase(CASP3)-dependent proapoptotic activity. Forward signaling may result in activation of components of the ERK signaling pathway including MAP2K1, MAP2K2, MAPK1 and MAPK3 which are phosphorylated upon activation of EPHA7.</text>
</comment>
<comment type="catalytic activity">
    <reaction evidence="7">
        <text>L-tyrosyl-[protein] + ATP = O-phospho-L-tyrosyl-[protein] + ADP + H(+)</text>
        <dbReference type="Rhea" id="RHEA:10596"/>
        <dbReference type="Rhea" id="RHEA-COMP:10136"/>
        <dbReference type="Rhea" id="RHEA-COMP:20101"/>
        <dbReference type="ChEBI" id="CHEBI:15378"/>
        <dbReference type="ChEBI" id="CHEBI:30616"/>
        <dbReference type="ChEBI" id="CHEBI:46858"/>
        <dbReference type="ChEBI" id="CHEBI:61978"/>
        <dbReference type="ChEBI" id="CHEBI:456216"/>
        <dbReference type="EC" id="2.7.10.1"/>
    </reaction>
</comment>
<comment type="subunit">
    <text evidence="1">Heterotetramer upon binding of the ligand. The heterotetramer is composed of an ephrin dimer and a receptor dimer. Oligomerization is probably required to induce biological responses (By similarity). Interacts (via PDZ-binding motif) with GRIP1 and PICK1 (via PDZ domain) (By similarity).</text>
</comment>
<comment type="subcellular location">
    <subcellularLocation>
        <location evidence="1">Cell membrane</location>
        <topology evidence="1">Single-pass type I membrane protein</topology>
    </subcellularLocation>
</comment>
<comment type="alternative products">
    <event type="alternative splicing"/>
    <isoform>
        <id>P54759-1</id>
        <name>Long</name>
        <sequence type="displayed"/>
    </isoform>
    <isoform>
        <id>P54759-2</id>
        <name>Short</name>
        <sequence type="described" ref="VSP_003012"/>
    </isoform>
</comment>
<comment type="tissue specificity">
    <text>Restricted to the nervous system.</text>
</comment>
<comment type="PTM">
    <text evidence="1">Phosphorylated.</text>
</comment>
<comment type="miscellaneous">
    <molecule>Isoform Long</molecule>
    <text>More widely expressed in the embryo.</text>
</comment>
<comment type="miscellaneous">
    <molecule>Isoform Short</molecule>
    <text evidence="10">Lacks the kinase domain.</text>
</comment>
<comment type="similarity">
    <text evidence="3">Belongs to the protein kinase superfamily. Tyr protein kinase family. Ephrin receptor subfamily.</text>
</comment>
<name>EPHA7_RAT</name>
<proteinExistence type="evidence at protein level"/>
<gene>
    <name type="primary">Epha7</name>
    <name type="synonym">Ehk-3</name>
    <name type="synonym">Ehk3</name>
</gene>
<keyword id="KW-0025">Alternative splicing</keyword>
<keyword id="KW-0053">Apoptosis</keyword>
<keyword id="KW-0067">ATP-binding</keyword>
<keyword id="KW-1003">Cell membrane</keyword>
<keyword id="KW-0217">Developmental protein</keyword>
<keyword id="KW-0325">Glycoprotein</keyword>
<keyword id="KW-0418">Kinase</keyword>
<keyword id="KW-0472">Membrane</keyword>
<keyword id="KW-0524">Neurogenesis</keyword>
<keyword id="KW-0547">Nucleotide-binding</keyword>
<keyword id="KW-0597">Phosphoprotein</keyword>
<keyword id="KW-0675">Receptor</keyword>
<keyword id="KW-1185">Reference proteome</keyword>
<keyword id="KW-0677">Repeat</keyword>
<keyword id="KW-0732">Signal</keyword>
<keyword id="KW-0808">Transferase</keyword>
<keyword id="KW-0812">Transmembrane</keyword>
<keyword id="KW-1133">Transmembrane helix</keyword>
<keyword id="KW-0829">Tyrosine-protein kinase</keyword>
<dbReference type="EC" id="2.7.10.1"/>
<dbReference type="EMBL" id="U21954">
    <property type="protein sequence ID" value="AAA86830.1"/>
    <property type="molecule type" value="mRNA"/>
</dbReference>
<dbReference type="EMBL" id="U21955">
    <property type="protein sequence ID" value="AAA86831.1"/>
    <property type="molecule type" value="mRNA"/>
</dbReference>
<dbReference type="RefSeq" id="NP_599158.1">
    <molecule id="P54759-1"/>
    <property type="nucleotide sequence ID" value="NM_134331.2"/>
</dbReference>
<dbReference type="RefSeq" id="XP_006238026.1">
    <property type="nucleotide sequence ID" value="XM_006237964.3"/>
</dbReference>
<dbReference type="SMR" id="P54759"/>
<dbReference type="BioGRID" id="251168">
    <property type="interactions" value="2"/>
</dbReference>
<dbReference type="FunCoup" id="P54759">
    <property type="interactions" value="2343"/>
</dbReference>
<dbReference type="IntAct" id="P54759">
    <property type="interactions" value="3"/>
</dbReference>
<dbReference type="STRING" id="10116.ENSRNOP00000009899"/>
<dbReference type="GlyCosmos" id="P54759">
    <property type="glycosylation" value="2 sites, No reported glycans"/>
</dbReference>
<dbReference type="GlyGen" id="P54759">
    <property type="glycosylation" value="2 sites"/>
</dbReference>
<dbReference type="iPTMnet" id="P54759"/>
<dbReference type="PhosphoSitePlus" id="P54759"/>
<dbReference type="PaxDb" id="10116-ENSRNOP00000009899"/>
<dbReference type="GeneID" id="171287"/>
<dbReference type="KEGG" id="rno:171287"/>
<dbReference type="UCSC" id="RGD:70957">
    <molecule id="P54759-1"/>
    <property type="organism name" value="rat"/>
</dbReference>
<dbReference type="AGR" id="RGD:70957"/>
<dbReference type="CTD" id="2045"/>
<dbReference type="RGD" id="70957">
    <property type="gene designation" value="Epha7"/>
</dbReference>
<dbReference type="VEuPathDB" id="HostDB:ENSRNOG00000007030"/>
<dbReference type="eggNOG" id="KOG0196">
    <property type="taxonomic scope" value="Eukaryota"/>
</dbReference>
<dbReference type="HOGENOM" id="CLU_000288_141_0_1"/>
<dbReference type="InParanoid" id="P54759"/>
<dbReference type="OrthoDB" id="4062651at2759"/>
<dbReference type="PhylomeDB" id="P54759"/>
<dbReference type="TreeFam" id="TF315608"/>
<dbReference type="BRENDA" id="2.7.10.1">
    <property type="organism ID" value="5301"/>
</dbReference>
<dbReference type="Reactome" id="R-RNO-2682334">
    <property type="pathway name" value="EPH-Ephrin signaling"/>
</dbReference>
<dbReference type="Reactome" id="R-RNO-3928663">
    <property type="pathway name" value="EPHA-mediated growth cone collapse"/>
</dbReference>
<dbReference type="Reactome" id="R-RNO-3928665">
    <property type="pathway name" value="EPH-ephrin mediated repulsion of cells"/>
</dbReference>
<dbReference type="PRO" id="PR:P54759"/>
<dbReference type="Proteomes" id="UP000002494">
    <property type="component" value="Chromosome 5"/>
</dbReference>
<dbReference type="Bgee" id="ENSRNOG00000007030">
    <property type="expression patterns" value="Expressed in frontal cortex and 16 other cell types or tissues"/>
</dbReference>
<dbReference type="GO" id="GO:0030425">
    <property type="term" value="C:dendrite"/>
    <property type="evidence" value="ECO:0000314"/>
    <property type="project" value="RGD"/>
</dbReference>
<dbReference type="GO" id="GO:0098978">
    <property type="term" value="C:glutamatergic synapse"/>
    <property type="evidence" value="ECO:0000314"/>
    <property type="project" value="SynGO"/>
</dbReference>
<dbReference type="GO" id="GO:0098686">
    <property type="term" value="C:hippocampal mossy fiber to CA3 synapse"/>
    <property type="evidence" value="ECO:0000314"/>
    <property type="project" value="SynGO"/>
</dbReference>
<dbReference type="GO" id="GO:0031594">
    <property type="term" value="C:neuromuscular junction"/>
    <property type="evidence" value="ECO:0000314"/>
    <property type="project" value="RGD"/>
</dbReference>
<dbReference type="GO" id="GO:0043025">
    <property type="term" value="C:neuronal cell body"/>
    <property type="evidence" value="ECO:0000314"/>
    <property type="project" value="RGD"/>
</dbReference>
<dbReference type="GO" id="GO:0005886">
    <property type="term" value="C:plasma membrane"/>
    <property type="evidence" value="ECO:0000266"/>
    <property type="project" value="RGD"/>
</dbReference>
<dbReference type="GO" id="GO:0098839">
    <property type="term" value="C:postsynaptic density membrane"/>
    <property type="evidence" value="ECO:0000314"/>
    <property type="project" value="SynGO"/>
</dbReference>
<dbReference type="GO" id="GO:0045211">
    <property type="term" value="C:postsynaptic membrane"/>
    <property type="evidence" value="ECO:0000314"/>
    <property type="project" value="RGD"/>
</dbReference>
<dbReference type="GO" id="GO:0099634">
    <property type="term" value="C:postsynaptic specialization membrane"/>
    <property type="evidence" value="ECO:0000314"/>
    <property type="project" value="SynGO"/>
</dbReference>
<dbReference type="GO" id="GO:0098685">
    <property type="term" value="C:Schaffer collateral - CA1 synapse"/>
    <property type="evidence" value="ECO:0000314"/>
    <property type="project" value="SynGO"/>
</dbReference>
<dbReference type="GO" id="GO:0005524">
    <property type="term" value="F:ATP binding"/>
    <property type="evidence" value="ECO:0007669"/>
    <property type="project" value="UniProtKB-KW"/>
</dbReference>
<dbReference type="GO" id="GO:0008046">
    <property type="term" value="F:axon guidance receptor activity"/>
    <property type="evidence" value="ECO:0000250"/>
    <property type="project" value="UniProtKB"/>
</dbReference>
<dbReference type="GO" id="GO:0045499">
    <property type="term" value="F:chemorepellent activity"/>
    <property type="evidence" value="ECO:0000250"/>
    <property type="project" value="UniProtKB"/>
</dbReference>
<dbReference type="GO" id="GO:0046875">
    <property type="term" value="F:ephrin receptor binding"/>
    <property type="evidence" value="ECO:0000314"/>
    <property type="project" value="RGD"/>
</dbReference>
<dbReference type="GO" id="GO:0005004">
    <property type="term" value="F:GPI-linked ephrin receptor activity"/>
    <property type="evidence" value="ECO:0000250"/>
    <property type="project" value="UniProtKB"/>
</dbReference>
<dbReference type="GO" id="GO:0019838">
    <property type="term" value="F:growth factor binding"/>
    <property type="evidence" value="ECO:0000266"/>
    <property type="project" value="RGD"/>
</dbReference>
<dbReference type="GO" id="GO:0004713">
    <property type="term" value="F:protein tyrosine kinase activity"/>
    <property type="evidence" value="ECO:0000314"/>
    <property type="project" value="UniProtKB"/>
</dbReference>
<dbReference type="GO" id="GO:0005005">
    <property type="term" value="F:transmembrane-ephrin receptor activity"/>
    <property type="evidence" value="ECO:0000318"/>
    <property type="project" value="GO_Central"/>
</dbReference>
<dbReference type="GO" id="GO:0007411">
    <property type="term" value="P:axon guidance"/>
    <property type="evidence" value="ECO:0000318"/>
    <property type="project" value="GO_Central"/>
</dbReference>
<dbReference type="GO" id="GO:0007420">
    <property type="term" value="P:brain development"/>
    <property type="evidence" value="ECO:0000270"/>
    <property type="project" value="RGD"/>
</dbReference>
<dbReference type="GO" id="GO:0048755">
    <property type="term" value="P:branching morphogenesis of a nerve"/>
    <property type="evidence" value="ECO:0000250"/>
    <property type="project" value="UniProtKB"/>
</dbReference>
<dbReference type="GO" id="GO:0048013">
    <property type="term" value="P:ephrin receptor signaling pathway"/>
    <property type="evidence" value="ECO:0000250"/>
    <property type="project" value="UniProtKB"/>
</dbReference>
<dbReference type="GO" id="GO:0050804">
    <property type="term" value="P:modulation of chemical synaptic transmission"/>
    <property type="evidence" value="ECO:0000266"/>
    <property type="project" value="RGD"/>
</dbReference>
<dbReference type="GO" id="GO:0050919">
    <property type="term" value="P:negative chemotaxis"/>
    <property type="evidence" value="ECO:0000250"/>
    <property type="project" value="UniProtKB"/>
</dbReference>
<dbReference type="GO" id="GO:0048671">
    <property type="term" value="P:negative regulation of collateral sprouting"/>
    <property type="evidence" value="ECO:0000266"/>
    <property type="project" value="RGD"/>
</dbReference>
<dbReference type="GO" id="GO:0051898">
    <property type="term" value="P:negative regulation of phosphatidylinositol 3-kinase/protein kinase B signal transduction"/>
    <property type="evidence" value="ECO:0007669"/>
    <property type="project" value="Ensembl"/>
</dbReference>
<dbReference type="GO" id="GO:0051964">
    <property type="term" value="P:negative regulation of synapse assembly"/>
    <property type="evidence" value="ECO:0000266"/>
    <property type="project" value="RGD"/>
</dbReference>
<dbReference type="GO" id="GO:0072178">
    <property type="term" value="P:nephric duct morphogenesis"/>
    <property type="evidence" value="ECO:0000266"/>
    <property type="project" value="RGD"/>
</dbReference>
<dbReference type="GO" id="GO:0051402">
    <property type="term" value="P:neuron apoptotic process"/>
    <property type="evidence" value="ECO:0000266"/>
    <property type="project" value="RGD"/>
</dbReference>
<dbReference type="GO" id="GO:0016310">
    <property type="term" value="P:phosphorylation"/>
    <property type="evidence" value="ECO:0000314"/>
    <property type="project" value="UniProtKB"/>
</dbReference>
<dbReference type="GO" id="GO:0043065">
    <property type="term" value="P:positive regulation of apoptotic process"/>
    <property type="evidence" value="ECO:0000315"/>
    <property type="project" value="RGD"/>
</dbReference>
<dbReference type="GO" id="GO:0043525">
    <property type="term" value="P:positive regulation of neuron apoptotic process"/>
    <property type="evidence" value="ECO:0000250"/>
    <property type="project" value="UniProtKB"/>
</dbReference>
<dbReference type="GO" id="GO:0022407">
    <property type="term" value="P:regulation of cell-cell adhesion"/>
    <property type="evidence" value="ECO:0000250"/>
    <property type="project" value="UniProtKB"/>
</dbReference>
<dbReference type="GO" id="GO:0070372">
    <property type="term" value="P:regulation of ERK1 and ERK2 cascade"/>
    <property type="evidence" value="ECO:0000250"/>
    <property type="project" value="UniProtKB"/>
</dbReference>
<dbReference type="GO" id="GO:0050730">
    <property type="term" value="P:regulation of peptidyl-tyrosine phosphorylation"/>
    <property type="evidence" value="ECO:0000250"/>
    <property type="project" value="UniProtKB"/>
</dbReference>
<dbReference type="GO" id="GO:0099175">
    <property type="term" value="P:regulation of postsynapse organization"/>
    <property type="evidence" value="ECO:0000266"/>
    <property type="project" value="RGD"/>
</dbReference>
<dbReference type="GO" id="GO:0031952">
    <property type="term" value="P:regulation of protein autophosphorylation"/>
    <property type="evidence" value="ECO:0000250"/>
    <property type="project" value="UniProtKB"/>
</dbReference>
<dbReference type="GO" id="GO:0031290">
    <property type="term" value="P:retinal ganglion cell axon guidance"/>
    <property type="evidence" value="ECO:0000266"/>
    <property type="project" value="RGD"/>
</dbReference>
<dbReference type="CDD" id="cd10485">
    <property type="entry name" value="EphR_LBD_A7"/>
    <property type="match status" value="1"/>
</dbReference>
<dbReference type="CDD" id="cd00063">
    <property type="entry name" value="FN3"/>
    <property type="match status" value="2"/>
</dbReference>
<dbReference type="CDD" id="cd05066">
    <property type="entry name" value="PTKc_EphR_A"/>
    <property type="match status" value="1"/>
</dbReference>
<dbReference type="CDD" id="cd09548">
    <property type="entry name" value="SAM_EPH-A7"/>
    <property type="match status" value="1"/>
</dbReference>
<dbReference type="FunFam" id="1.10.150.50:FF:000001">
    <property type="entry name" value="Ephrin type-A receptor 5"/>
    <property type="match status" value="1"/>
</dbReference>
<dbReference type="FunFam" id="2.10.50.10:FF:000001">
    <property type="entry name" value="Ephrin type-A receptor 5"/>
    <property type="match status" value="1"/>
</dbReference>
<dbReference type="FunFam" id="2.60.40.10:FF:000045">
    <property type="entry name" value="Ephrin type-A receptor 5"/>
    <property type="match status" value="1"/>
</dbReference>
<dbReference type="FunFam" id="2.60.40.1770:FF:000001">
    <property type="entry name" value="Ephrin type-A receptor 5"/>
    <property type="match status" value="1"/>
</dbReference>
<dbReference type="FunFam" id="3.30.200.20:FF:000001">
    <property type="entry name" value="Ephrin type-A receptor 5"/>
    <property type="match status" value="1"/>
</dbReference>
<dbReference type="FunFam" id="1.10.510.10:FF:000130">
    <property type="entry name" value="Ephrin type-A receptor 7"/>
    <property type="match status" value="1"/>
</dbReference>
<dbReference type="FunFam" id="2.60.120.260:FF:000001">
    <property type="entry name" value="Ephrin type-A receptor 7"/>
    <property type="match status" value="1"/>
</dbReference>
<dbReference type="FunFam" id="2.60.40.10:FF:000190">
    <property type="entry name" value="Ephrin type-A receptor 7"/>
    <property type="match status" value="1"/>
</dbReference>
<dbReference type="Gene3D" id="2.60.40.1770">
    <property type="entry name" value="ephrin a2 ectodomain"/>
    <property type="match status" value="1"/>
</dbReference>
<dbReference type="Gene3D" id="2.60.120.260">
    <property type="entry name" value="Galactose-binding domain-like"/>
    <property type="match status" value="1"/>
</dbReference>
<dbReference type="Gene3D" id="2.60.40.10">
    <property type="entry name" value="Immunoglobulins"/>
    <property type="match status" value="2"/>
</dbReference>
<dbReference type="Gene3D" id="3.30.200.20">
    <property type="entry name" value="Phosphorylase Kinase, domain 1"/>
    <property type="match status" value="1"/>
</dbReference>
<dbReference type="Gene3D" id="1.10.150.50">
    <property type="entry name" value="Transcription Factor, Ets-1"/>
    <property type="match status" value="1"/>
</dbReference>
<dbReference type="Gene3D" id="1.10.510.10">
    <property type="entry name" value="Transferase(Phosphotransferase) domain 1"/>
    <property type="match status" value="1"/>
</dbReference>
<dbReference type="Gene3D" id="2.10.50.10">
    <property type="entry name" value="Tumor Necrosis Factor Receptor, subunit A, domain 2"/>
    <property type="match status" value="1"/>
</dbReference>
<dbReference type="InterPro" id="IPR027936">
    <property type="entry name" value="Eph_TM"/>
</dbReference>
<dbReference type="InterPro" id="IPR034283">
    <property type="entry name" value="EphA7_rcpt_lig-bd"/>
</dbReference>
<dbReference type="InterPro" id="IPR001090">
    <property type="entry name" value="Ephrin_rcpt_lig-bd_dom"/>
</dbReference>
<dbReference type="InterPro" id="IPR050449">
    <property type="entry name" value="Ephrin_rcpt_TKs"/>
</dbReference>
<dbReference type="InterPro" id="IPR003961">
    <property type="entry name" value="FN3_dom"/>
</dbReference>
<dbReference type="InterPro" id="IPR036116">
    <property type="entry name" value="FN3_sf"/>
</dbReference>
<dbReference type="InterPro" id="IPR008979">
    <property type="entry name" value="Galactose-bd-like_sf"/>
</dbReference>
<dbReference type="InterPro" id="IPR009030">
    <property type="entry name" value="Growth_fac_rcpt_cys_sf"/>
</dbReference>
<dbReference type="InterPro" id="IPR013783">
    <property type="entry name" value="Ig-like_fold"/>
</dbReference>
<dbReference type="InterPro" id="IPR011009">
    <property type="entry name" value="Kinase-like_dom_sf"/>
</dbReference>
<dbReference type="InterPro" id="IPR000719">
    <property type="entry name" value="Prot_kinase_dom"/>
</dbReference>
<dbReference type="InterPro" id="IPR017441">
    <property type="entry name" value="Protein_kinase_ATP_BS"/>
</dbReference>
<dbReference type="InterPro" id="IPR001660">
    <property type="entry name" value="SAM"/>
</dbReference>
<dbReference type="InterPro" id="IPR013761">
    <property type="entry name" value="SAM/pointed_sf"/>
</dbReference>
<dbReference type="InterPro" id="IPR001245">
    <property type="entry name" value="Ser-Thr/Tyr_kinase_cat_dom"/>
</dbReference>
<dbReference type="InterPro" id="IPR008266">
    <property type="entry name" value="Tyr_kinase_AS"/>
</dbReference>
<dbReference type="InterPro" id="IPR020635">
    <property type="entry name" value="Tyr_kinase_cat_dom"/>
</dbReference>
<dbReference type="InterPro" id="IPR016257">
    <property type="entry name" value="Tyr_kinase_ephrin_rcpt"/>
</dbReference>
<dbReference type="InterPro" id="IPR001426">
    <property type="entry name" value="Tyr_kinase_rcpt_V_CS"/>
</dbReference>
<dbReference type="PANTHER" id="PTHR46877">
    <property type="entry name" value="EPH RECEPTOR A5"/>
    <property type="match status" value="1"/>
</dbReference>
<dbReference type="PANTHER" id="PTHR46877:SF9">
    <property type="entry name" value="EPHRIN TYPE-A RECEPTOR 7"/>
    <property type="match status" value="1"/>
</dbReference>
<dbReference type="Pfam" id="PF14575">
    <property type="entry name" value="EphA2_TM"/>
    <property type="match status" value="1"/>
</dbReference>
<dbReference type="Pfam" id="PF01404">
    <property type="entry name" value="Ephrin_lbd"/>
    <property type="match status" value="1"/>
</dbReference>
<dbReference type="Pfam" id="PF00041">
    <property type="entry name" value="fn3"/>
    <property type="match status" value="2"/>
</dbReference>
<dbReference type="Pfam" id="PF07714">
    <property type="entry name" value="PK_Tyr_Ser-Thr"/>
    <property type="match status" value="1"/>
</dbReference>
<dbReference type="Pfam" id="PF00536">
    <property type="entry name" value="SAM_1"/>
    <property type="match status" value="1"/>
</dbReference>
<dbReference type="PIRSF" id="PIRSF000666">
    <property type="entry name" value="TyrPK_ephrin_receptor"/>
    <property type="match status" value="1"/>
</dbReference>
<dbReference type="PRINTS" id="PR00014">
    <property type="entry name" value="FNTYPEIII"/>
</dbReference>
<dbReference type="PRINTS" id="PR00109">
    <property type="entry name" value="TYRKINASE"/>
</dbReference>
<dbReference type="SMART" id="SM00615">
    <property type="entry name" value="EPH_lbd"/>
    <property type="match status" value="1"/>
</dbReference>
<dbReference type="SMART" id="SM01411">
    <property type="entry name" value="Ephrin_rec_like"/>
    <property type="match status" value="1"/>
</dbReference>
<dbReference type="SMART" id="SM00060">
    <property type="entry name" value="FN3"/>
    <property type="match status" value="2"/>
</dbReference>
<dbReference type="SMART" id="SM00454">
    <property type="entry name" value="SAM"/>
    <property type="match status" value="1"/>
</dbReference>
<dbReference type="SMART" id="SM00219">
    <property type="entry name" value="TyrKc"/>
    <property type="match status" value="1"/>
</dbReference>
<dbReference type="SUPFAM" id="SSF49265">
    <property type="entry name" value="Fibronectin type III"/>
    <property type="match status" value="1"/>
</dbReference>
<dbReference type="SUPFAM" id="SSF49785">
    <property type="entry name" value="Galactose-binding domain-like"/>
    <property type="match status" value="1"/>
</dbReference>
<dbReference type="SUPFAM" id="SSF57184">
    <property type="entry name" value="Growth factor receptor domain"/>
    <property type="match status" value="1"/>
</dbReference>
<dbReference type="SUPFAM" id="SSF56112">
    <property type="entry name" value="Protein kinase-like (PK-like)"/>
    <property type="match status" value="1"/>
</dbReference>
<dbReference type="SUPFAM" id="SSF47769">
    <property type="entry name" value="SAM/Pointed domain"/>
    <property type="match status" value="1"/>
</dbReference>
<dbReference type="PROSITE" id="PS01186">
    <property type="entry name" value="EGF_2"/>
    <property type="match status" value="1"/>
</dbReference>
<dbReference type="PROSITE" id="PS51550">
    <property type="entry name" value="EPH_LBD"/>
    <property type="match status" value="1"/>
</dbReference>
<dbReference type="PROSITE" id="PS50853">
    <property type="entry name" value="FN3"/>
    <property type="match status" value="2"/>
</dbReference>
<dbReference type="PROSITE" id="PS00107">
    <property type="entry name" value="PROTEIN_KINASE_ATP"/>
    <property type="match status" value="1"/>
</dbReference>
<dbReference type="PROSITE" id="PS50011">
    <property type="entry name" value="PROTEIN_KINASE_DOM"/>
    <property type="match status" value="1"/>
</dbReference>
<dbReference type="PROSITE" id="PS00109">
    <property type="entry name" value="PROTEIN_KINASE_TYR"/>
    <property type="match status" value="1"/>
</dbReference>
<dbReference type="PROSITE" id="PS00790">
    <property type="entry name" value="RECEPTOR_TYR_KIN_V_1"/>
    <property type="match status" value="1"/>
</dbReference>
<dbReference type="PROSITE" id="PS00791">
    <property type="entry name" value="RECEPTOR_TYR_KIN_V_2"/>
    <property type="match status" value="1"/>
</dbReference>
<dbReference type="PROSITE" id="PS50105">
    <property type="entry name" value="SAM_DOMAIN"/>
    <property type="match status" value="1"/>
</dbReference>
<evidence type="ECO:0000250" key="1"/>
<evidence type="ECO:0000255" key="2"/>
<evidence type="ECO:0000255" key="3">
    <source>
        <dbReference type="PROSITE-ProRule" id="PRU00159"/>
    </source>
</evidence>
<evidence type="ECO:0000255" key="4">
    <source>
        <dbReference type="PROSITE-ProRule" id="PRU00184"/>
    </source>
</evidence>
<evidence type="ECO:0000255" key="5">
    <source>
        <dbReference type="PROSITE-ProRule" id="PRU00316"/>
    </source>
</evidence>
<evidence type="ECO:0000255" key="6">
    <source>
        <dbReference type="PROSITE-ProRule" id="PRU00883"/>
    </source>
</evidence>
<evidence type="ECO:0000255" key="7">
    <source>
        <dbReference type="PROSITE-ProRule" id="PRU10028"/>
    </source>
</evidence>
<evidence type="ECO:0000269" key="8">
    <source>
    </source>
</evidence>
<evidence type="ECO:0000303" key="9">
    <source>
    </source>
</evidence>
<evidence type="ECO:0000305" key="10"/>
<reference key="1">
    <citation type="journal article" date="1995" name="Oncogene">
        <title>Identification of full-length and truncated forms of Ehk-3, a novel member of the Eph receptor tyrosine kinase family.</title>
        <authorList>
            <person name="Valenzuela D.M."/>
            <person name="Rojas E."/>
            <person name="Griffiths J.A."/>
            <person name="Compton D.L."/>
            <person name="Gisser M."/>
            <person name="Ip N.Y."/>
            <person name="Goldfarb M."/>
            <person name="Yancopoulos G.D."/>
        </authorList>
    </citation>
    <scope>NUCLEOTIDE SEQUENCE [MRNA] (ISOFORMS LONG AND SHORT)</scope>
</reference>
<reference key="2">
    <citation type="journal article" date="2006" name="J. Neurosci. Res.">
        <title>Inhibition of EphA7 up-regulation after spinal cord injury reduces apoptosis and promotes locomotor recovery.</title>
        <authorList>
            <person name="Figueroa J.D."/>
            <person name="Benton R.L."/>
            <person name="Velazquez I."/>
            <person name="Torrado A.I."/>
            <person name="Ortiz C.M."/>
            <person name="Hernandez C.M."/>
            <person name="Diaz J.J."/>
            <person name="Magnuson D.S."/>
            <person name="Whittemore S.R."/>
            <person name="Miranda J.D."/>
        </authorList>
    </citation>
    <scope>FUNCTION IN APOPTOSIS</scope>
</reference>
<organism>
    <name type="scientific">Rattus norvegicus</name>
    <name type="common">Rat</name>
    <dbReference type="NCBI Taxonomy" id="10116"/>
    <lineage>
        <taxon>Eukaryota</taxon>
        <taxon>Metazoa</taxon>
        <taxon>Chordata</taxon>
        <taxon>Craniata</taxon>
        <taxon>Vertebrata</taxon>
        <taxon>Euteleostomi</taxon>
        <taxon>Mammalia</taxon>
        <taxon>Eutheria</taxon>
        <taxon>Euarchontoglires</taxon>
        <taxon>Glires</taxon>
        <taxon>Rodentia</taxon>
        <taxon>Myomorpha</taxon>
        <taxon>Muroidea</taxon>
        <taxon>Muridae</taxon>
        <taxon>Murinae</taxon>
        <taxon>Rattus</taxon>
    </lineage>
</organism>